<name>RIMM_PARC0</name>
<comment type="function">
    <text evidence="1">An accessory protein needed during the final step in the assembly of 30S ribosomal subunit, possibly for assembly of the head region. Essential for efficient processing of 16S rRNA. May be needed both before and after RbfA during the maturation of 16S rRNA. It has affinity for free ribosomal 30S subunits but not for 70S ribosomes.</text>
</comment>
<comment type="subunit">
    <text evidence="1">Binds ribosomal protein uS19.</text>
</comment>
<comment type="subcellular location">
    <subcellularLocation>
        <location evidence="1">Cytoplasm</location>
    </subcellularLocation>
</comment>
<comment type="domain">
    <text evidence="1">The PRC barrel domain binds ribosomal protein uS19.</text>
</comment>
<comment type="similarity">
    <text evidence="1">Belongs to the RimM family.</text>
</comment>
<proteinExistence type="inferred from homology"/>
<protein>
    <recommendedName>
        <fullName evidence="1">Ribosome maturation factor RimM</fullName>
    </recommendedName>
</protein>
<feature type="chain" id="PRO_0000351714" description="Ribosome maturation factor RimM">
    <location>
        <begin position="1"/>
        <end position="191"/>
    </location>
</feature>
<feature type="domain" description="PRC barrel" evidence="1">
    <location>
        <begin position="114"/>
        <end position="191"/>
    </location>
</feature>
<reference key="1">
    <citation type="submission" date="2006-12" db="EMBL/GenBank/DDBJ databases">
        <title>Complete sequence of Acidovorax avenae subsp. citrulli AAC00-1.</title>
        <authorList>
            <person name="Copeland A."/>
            <person name="Lucas S."/>
            <person name="Lapidus A."/>
            <person name="Barry K."/>
            <person name="Detter J.C."/>
            <person name="Glavina del Rio T."/>
            <person name="Dalin E."/>
            <person name="Tice H."/>
            <person name="Pitluck S."/>
            <person name="Kiss H."/>
            <person name="Brettin T."/>
            <person name="Bruce D."/>
            <person name="Han C."/>
            <person name="Tapia R."/>
            <person name="Gilna P."/>
            <person name="Schmutz J."/>
            <person name="Larimer F."/>
            <person name="Land M."/>
            <person name="Hauser L."/>
            <person name="Kyrpides N."/>
            <person name="Kim E."/>
            <person name="Stahl D."/>
            <person name="Richardson P."/>
        </authorList>
    </citation>
    <scope>NUCLEOTIDE SEQUENCE [LARGE SCALE GENOMIC DNA]</scope>
    <source>
        <strain>AAC00-1</strain>
    </source>
</reference>
<accession>A1TND1</accession>
<keyword id="KW-0143">Chaperone</keyword>
<keyword id="KW-0963">Cytoplasm</keyword>
<keyword id="KW-0690">Ribosome biogenesis</keyword>
<keyword id="KW-0698">rRNA processing</keyword>
<dbReference type="EMBL" id="CP000512">
    <property type="protein sequence ID" value="ABM32469.1"/>
    <property type="molecule type" value="Genomic_DNA"/>
</dbReference>
<dbReference type="RefSeq" id="WP_011795014.1">
    <property type="nucleotide sequence ID" value="NC_008752.1"/>
</dbReference>
<dbReference type="SMR" id="A1TND1"/>
<dbReference type="STRING" id="397945.Aave_1885"/>
<dbReference type="KEGG" id="aav:Aave_1885"/>
<dbReference type="eggNOG" id="COG0806">
    <property type="taxonomic scope" value="Bacteria"/>
</dbReference>
<dbReference type="HOGENOM" id="CLU_077636_1_0_4"/>
<dbReference type="OrthoDB" id="9783509at2"/>
<dbReference type="Proteomes" id="UP000002596">
    <property type="component" value="Chromosome"/>
</dbReference>
<dbReference type="GO" id="GO:0005737">
    <property type="term" value="C:cytoplasm"/>
    <property type="evidence" value="ECO:0007669"/>
    <property type="project" value="UniProtKB-SubCell"/>
</dbReference>
<dbReference type="GO" id="GO:0005840">
    <property type="term" value="C:ribosome"/>
    <property type="evidence" value="ECO:0007669"/>
    <property type="project" value="InterPro"/>
</dbReference>
<dbReference type="GO" id="GO:0043022">
    <property type="term" value="F:ribosome binding"/>
    <property type="evidence" value="ECO:0007669"/>
    <property type="project" value="InterPro"/>
</dbReference>
<dbReference type="GO" id="GO:0042274">
    <property type="term" value="P:ribosomal small subunit biogenesis"/>
    <property type="evidence" value="ECO:0007669"/>
    <property type="project" value="UniProtKB-UniRule"/>
</dbReference>
<dbReference type="GO" id="GO:0006364">
    <property type="term" value="P:rRNA processing"/>
    <property type="evidence" value="ECO:0007669"/>
    <property type="project" value="UniProtKB-UniRule"/>
</dbReference>
<dbReference type="Gene3D" id="2.30.30.240">
    <property type="entry name" value="PRC-barrel domain"/>
    <property type="match status" value="1"/>
</dbReference>
<dbReference type="Gene3D" id="2.40.30.60">
    <property type="entry name" value="RimM"/>
    <property type="match status" value="1"/>
</dbReference>
<dbReference type="HAMAP" id="MF_00014">
    <property type="entry name" value="Ribosome_mat_RimM"/>
    <property type="match status" value="1"/>
</dbReference>
<dbReference type="InterPro" id="IPR011033">
    <property type="entry name" value="PRC_barrel-like_sf"/>
</dbReference>
<dbReference type="InterPro" id="IPR056792">
    <property type="entry name" value="PRC_RimM"/>
</dbReference>
<dbReference type="InterPro" id="IPR011961">
    <property type="entry name" value="RimM"/>
</dbReference>
<dbReference type="InterPro" id="IPR002676">
    <property type="entry name" value="RimM_N"/>
</dbReference>
<dbReference type="InterPro" id="IPR036976">
    <property type="entry name" value="RimM_N_sf"/>
</dbReference>
<dbReference type="InterPro" id="IPR009000">
    <property type="entry name" value="Transl_B-barrel_sf"/>
</dbReference>
<dbReference type="NCBIfam" id="TIGR02273">
    <property type="entry name" value="16S_RimM"/>
    <property type="match status" value="1"/>
</dbReference>
<dbReference type="PANTHER" id="PTHR33692">
    <property type="entry name" value="RIBOSOME MATURATION FACTOR RIMM"/>
    <property type="match status" value="1"/>
</dbReference>
<dbReference type="PANTHER" id="PTHR33692:SF1">
    <property type="entry name" value="RIBOSOME MATURATION FACTOR RIMM"/>
    <property type="match status" value="1"/>
</dbReference>
<dbReference type="Pfam" id="PF24986">
    <property type="entry name" value="PRC_RimM"/>
    <property type="match status" value="1"/>
</dbReference>
<dbReference type="Pfam" id="PF01782">
    <property type="entry name" value="RimM"/>
    <property type="match status" value="1"/>
</dbReference>
<dbReference type="SUPFAM" id="SSF50346">
    <property type="entry name" value="PRC-barrel domain"/>
    <property type="match status" value="1"/>
</dbReference>
<dbReference type="SUPFAM" id="SSF50447">
    <property type="entry name" value="Translation proteins"/>
    <property type="match status" value="1"/>
</dbReference>
<sequence>MPALPILDPADLPADAVEVGRIADAWGVKGWFKVLPYSADPEALFSSKRWYLQPSEKGAKSFFTGTVLLPIRQAREHSDSVVAQAQGVDDRDAAEALRGARIFVPRSSFPTAAEDEYYWVDLIGLEVVNREGVALGSVRELLATGPQTTLVLSFPQEGGKEGERMIPFVSAFVDRVDIAGRRIVVDWQPDY</sequence>
<evidence type="ECO:0000255" key="1">
    <source>
        <dbReference type="HAMAP-Rule" id="MF_00014"/>
    </source>
</evidence>
<organism>
    <name type="scientific">Paracidovorax citrulli (strain AAC00-1)</name>
    <name type="common">Acidovorax citrulli</name>
    <dbReference type="NCBI Taxonomy" id="397945"/>
    <lineage>
        <taxon>Bacteria</taxon>
        <taxon>Pseudomonadati</taxon>
        <taxon>Pseudomonadota</taxon>
        <taxon>Betaproteobacteria</taxon>
        <taxon>Burkholderiales</taxon>
        <taxon>Comamonadaceae</taxon>
        <taxon>Paracidovorax</taxon>
    </lineage>
</organism>
<gene>
    <name evidence="1" type="primary">rimM</name>
    <name type="ordered locus">Aave_1885</name>
</gene>